<dbReference type="EMBL" id="D00633">
    <property type="status" value="NOT_ANNOTATED_CDS"/>
    <property type="molecule type" value="Genomic_DNA"/>
</dbReference>
<dbReference type="PIR" id="A36255">
    <property type="entry name" value="EDBESP"/>
</dbReference>
<dbReference type="GO" id="GO:0010468">
    <property type="term" value="P:regulation of gene expression"/>
    <property type="evidence" value="ECO:0007669"/>
    <property type="project" value="InterPro"/>
</dbReference>
<dbReference type="InterPro" id="IPR003403">
    <property type="entry name" value="IE68"/>
</dbReference>
<dbReference type="Pfam" id="PF02479">
    <property type="entry name" value="Herpes_IE68"/>
    <property type="match status" value="1"/>
</dbReference>
<evidence type="ECO:0000256" key="1">
    <source>
        <dbReference type="SAM" id="MobiDB-lite"/>
    </source>
</evidence>
<evidence type="ECO:0000305" key="2"/>
<feature type="chain" id="PRO_0000115842" description="Transcriptional regulator ICP22 homolog">
    <location>
        <begin position="1"/>
        <end position="364"/>
    </location>
</feature>
<feature type="region of interest" description="Disordered" evidence="1">
    <location>
        <begin position="1"/>
        <end position="73"/>
    </location>
</feature>
<feature type="region of interest" description="Disordered" evidence="1">
    <location>
        <begin position="173"/>
        <end position="364"/>
    </location>
</feature>
<feature type="compositionally biased region" description="Pro residues" evidence="1">
    <location>
        <begin position="12"/>
        <end position="46"/>
    </location>
</feature>
<feature type="compositionally biased region" description="Acidic residues" evidence="1">
    <location>
        <begin position="181"/>
        <end position="191"/>
    </location>
</feature>
<feature type="compositionally biased region" description="Acidic residues" evidence="1">
    <location>
        <begin position="207"/>
        <end position="286"/>
    </location>
</feature>
<feature type="compositionally biased region" description="Acidic residues" evidence="1">
    <location>
        <begin position="294"/>
        <end position="343"/>
    </location>
</feature>
<feature type="compositionally biased region" description="Low complexity" evidence="1">
    <location>
        <begin position="355"/>
        <end position="364"/>
    </location>
</feature>
<keyword id="KW-0244">Early protein</keyword>
<organismHost>
    <name type="scientific">Sus scrofa</name>
    <name type="common">Pig</name>
    <dbReference type="NCBI Taxonomy" id="9823"/>
</organismHost>
<protein>
    <recommendedName>
        <fullName>Transcriptional regulator ICP22 homolog</fullName>
    </recommendedName>
    <alternativeName>
        <fullName>Immediate-early protein RSP40</fullName>
    </alternativeName>
</protein>
<sequence>MDRVWADWYEPVPSPPFSPVDPPGPRPTTPVPGSSPPSPASTPTPPKRGRYVVEHPEYGPPPDPEEVRVHGARGPGAFCAAPWRPDTRRLGADVNRLFRGIAVSAADVTGDTRALRRALFDFYAMGYTRQRPSAPCWQALLQLSPEQSAPLRSALRELNERDVYDPRVLSPPVIEGPLFGEECDVDEDDAGSDTTVASEFSFRGSVCEDDGEDEDEEEDGEEEDEDEEGEEEEDEEEEEGDEDGETDVYEEDDEAEDEEDEEDGDDFDGASVGDDDVFEPPEDGSDGEGSGSDDGGDGEDEDEDEDEDEDEDDGEDEEDEEGEDGGEDGEDGEEDEDEDGEGEEGGKDAARRGTRAPTRPAAAP</sequence>
<comment type="similarity">
    <text evidence="2">Belongs to the herpesviridae ICP22 family.</text>
</comment>
<name>ICP22_SUHVK</name>
<reference key="1">
    <citation type="journal article" date="1990" name="J. Gen. Virol.">
        <title>The structure of the pseudorabies virus genome at the end of the inverted repeat sequences proximal to the junction with the short unique region.</title>
        <authorList>
            <person name="Zhang G."/>
            <person name="Leader D.P."/>
        </authorList>
    </citation>
    <scope>NUCLEOTIDE SEQUENCE [GENOMIC DNA]</scope>
</reference>
<gene>
    <name type="primary">RSP40</name>
</gene>
<proteinExistence type="inferred from homology"/>
<accession>P24827</accession>
<organism>
    <name type="scientific">Suid herpesvirus 1 (strain Kaplan)</name>
    <name type="common">SuHV-1</name>
    <name type="synonym">Pseudorabies virus (strain Kaplan)</name>
    <dbReference type="NCBI Taxonomy" id="33703"/>
    <lineage>
        <taxon>Viruses</taxon>
        <taxon>Duplodnaviria</taxon>
        <taxon>Heunggongvirae</taxon>
        <taxon>Peploviricota</taxon>
        <taxon>Herviviricetes</taxon>
        <taxon>Herpesvirales</taxon>
        <taxon>Orthoherpesviridae</taxon>
        <taxon>Alphaherpesvirinae</taxon>
        <taxon>Varicellovirus</taxon>
        <taxon>Varicellovirus suidalpha1</taxon>
        <taxon>Suid herpesvirus 1</taxon>
    </lineage>
</organism>